<feature type="chain" id="PRO_0000219264" description="Tetraspanin-16">
    <location>
        <begin position="1"/>
        <end position="245"/>
    </location>
</feature>
<feature type="topological domain" description="Cytoplasmic" evidence="1">
    <location>
        <begin position="1"/>
        <end position="13"/>
    </location>
</feature>
<feature type="transmembrane region" description="Helical" evidence="1">
    <location>
        <begin position="14"/>
        <end position="34"/>
    </location>
</feature>
<feature type="topological domain" description="Extracellular" evidence="1">
    <location>
        <begin position="35"/>
        <end position="37"/>
    </location>
</feature>
<feature type="transmembrane region" description="Helical" evidence="1">
    <location>
        <begin position="38"/>
        <end position="58"/>
    </location>
</feature>
<feature type="topological domain" description="Cytoplasmic" evidence="1">
    <location>
        <position position="59"/>
    </location>
</feature>
<feature type="transmembrane region" description="Helical" evidence="1">
    <location>
        <begin position="60"/>
        <end position="80"/>
    </location>
</feature>
<feature type="topological domain" description="Extracellular" evidence="1">
    <location>
        <begin position="81"/>
        <end position="94"/>
    </location>
</feature>
<feature type="transmembrane region" description="Helical" evidence="1">
    <location>
        <begin position="95"/>
        <end position="115"/>
    </location>
</feature>
<feature type="topological domain" description="Cytoplasmic" evidence="1">
    <location>
        <begin position="116"/>
        <end position="245"/>
    </location>
</feature>
<feature type="splice variant" id="VSP_056723" description="In isoform 3." evidence="3">
    <location>
        <begin position="90"/>
        <end position="114"/>
    </location>
</feature>
<feature type="splice variant" id="VSP_056724" description="In isoform 4." evidence="2">
    <original>LKCCGVNNYT</original>
    <variation>GLSKYFFSSL</variation>
    <location>
        <begin position="151"/>
        <end position="160"/>
    </location>
</feature>
<feature type="splice variant" id="VSP_056725" description="In isoform 4." evidence="2">
    <location>
        <begin position="161"/>
        <end position="245"/>
    </location>
</feature>
<feature type="splice variant" id="VSP_056726" description="In isoform 2 and isoform 3." evidence="3">
    <original>RWGSRYVAQAGLELLA</original>
    <variation>LPGILATLLLFIKLG</variation>
    <location>
        <begin position="230"/>
        <end position="245"/>
    </location>
</feature>
<feature type="sequence variant" id="VAR_052329" description="In dbSNP:rs34162761.">
    <original>Y</original>
    <variation>D</variation>
    <location>
        <position position="53"/>
    </location>
</feature>
<feature type="sequence variant" id="VAR_052330" description="In dbSNP:rs17001344.">
    <original>L</original>
    <variation>P</variation>
    <location>
        <position position="55"/>
    </location>
</feature>
<feature type="sequence variant" id="VAR_052331" description="In dbSNP:rs318687.">
    <original>S</original>
    <variation>C</variation>
    <location>
        <position position="233"/>
    </location>
</feature>
<proteinExistence type="evidence at protein level"/>
<sequence length="245" mass="26266">MAEIHTPYSSLKKLLSLLNGFVAVSGIILVGLGIGGKCGGASLTNVLGLSSAYLLHVGNLCLVMGCITVLLGCAGWYGATKESRGTLLFCILSMVIVLIMEVTAATVVLLFFPIVGDVALEHTFVTLRKNYRGYNEPDDYSTQWNLVMEKLKCCGVNNYTDFSGSSFEMTTGHTYPRSCCKSIGSVSCDGRDVSPNVIHQKGCFHKLLKITKTQSFTLSGSSLGAAVIQRWGSRYVAQAGLELLA</sequence>
<protein>
    <recommendedName>
        <fullName>Tetraspanin-16</fullName>
        <shortName>Tspan-16</shortName>
    </recommendedName>
    <alternativeName>
        <fullName>Tetraspanin TM4-B</fullName>
    </alternativeName>
    <alternativeName>
        <fullName>Transmembrane 4 superfamily member 16</fullName>
    </alternativeName>
</protein>
<dbReference type="EMBL" id="AF133424">
    <property type="protein sequence ID" value="AAF08363.1"/>
    <property type="molecule type" value="mRNA"/>
</dbReference>
<dbReference type="EMBL" id="AC011472">
    <property type="status" value="NOT_ANNOTATED_CDS"/>
    <property type="molecule type" value="Genomic_DNA"/>
</dbReference>
<dbReference type="EMBL" id="AC024575">
    <property type="status" value="NOT_ANNOTATED_CDS"/>
    <property type="molecule type" value="Genomic_DNA"/>
</dbReference>
<dbReference type="EMBL" id="AC098777">
    <property type="status" value="NOT_ANNOTATED_CDS"/>
    <property type="molecule type" value="Genomic_DNA"/>
</dbReference>
<dbReference type="EMBL" id="BC029908">
    <property type="protein sequence ID" value="AAH29908.1"/>
    <property type="molecule type" value="mRNA"/>
</dbReference>
<dbReference type="CCDS" id="CCDS12256.1">
    <molecule id="Q9UKR8-1"/>
</dbReference>
<dbReference type="CCDS" id="CCDS62549.1">
    <molecule id="Q9UKR8-2"/>
</dbReference>
<dbReference type="CCDS" id="CCDS62550.1">
    <molecule id="Q9UKR8-3"/>
</dbReference>
<dbReference type="RefSeq" id="NP_001269438.1">
    <molecule id="Q9UKR8-2"/>
    <property type="nucleotide sequence ID" value="NM_001282509.2"/>
</dbReference>
<dbReference type="RefSeq" id="NP_001269439.1">
    <molecule id="Q9UKR8-3"/>
    <property type="nucleotide sequence ID" value="NM_001282510.2"/>
</dbReference>
<dbReference type="RefSeq" id="NP_036598.1">
    <molecule id="Q9UKR8-1"/>
    <property type="nucleotide sequence ID" value="NM_012466.4"/>
</dbReference>
<dbReference type="SMR" id="Q9UKR8"/>
<dbReference type="BioGRID" id="117729">
    <property type="interactions" value="23"/>
</dbReference>
<dbReference type="FunCoup" id="Q9UKR8">
    <property type="interactions" value="1"/>
</dbReference>
<dbReference type="IntAct" id="Q9UKR8">
    <property type="interactions" value="21"/>
</dbReference>
<dbReference type="STRING" id="9606.ENSP00000319486"/>
<dbReference type="BioMuta" id="TSPAN16"/>
<dbReference type="DMDM" id="11135364"/>
<dbReference type="jPOST" id="Q9UKR8"/>
<dbReference type="MassIVE" id="Q9UKR8"/>
<dbReference type="PaxDb" id="9606-ENSP00000319486"/>
<dbReference type="PeptideAtlas" id="Q9UKR8"/>
<dbReference type="ProteomicsDB" id="72182"/>
<dbReference type="ProteomicsDB" id="84842">
    <molecule id="Q9UKR8-1"/>
</dbReference>
<dbReference type="Antibodypedia" id="52080">
    <property type="antibodies" value="59 antibodies from 9 providers"/>
</dbReference>
<dbReference type="DNASU" id="26526"/>
<dbReference type="Ensembl" id="ENST00000316737.5">
    <molecule id="Q9UKR8-1"/>
    <property type="protein sequence ID" value="ENSP00000319486.1"/>
    <property type="gene ID" value="ENSG00000130167.14"/>
</dbReference>
<dbReference type="Ensembl" id="ENST00000337994.5">
    <molecule id="Q9UKR8-4"/>
    <property type="protein sequence ID" value="ENSP00000338759.5"/>
    <property type="gene ID" value="ENSG00000130167.14"/>
</dbReference>
<dbReference type="Ensembl" id="ENST00000590327.6">
    <molecule id="Q9UKR8-2"/>
    <property type="protein sequence ID" value="ENSP00000467341.1"/>
    <property type="gene ID" value="ENSG00000130167.14"/>
</dbReference>
<dbReference type="Ensembl" id="ENST00000592955.5">
    <molecule id="Q9UKR8-3"/>
    <property type="protein sequence ID" value="ENSP00000466751.1"/>
    <property type="gene ID" value="ENSG00000130167.14"/>
</dbReference>
<dbReference type="Ensembl" id="ENST00000621731.4">
    <molecule id="Q9UKR8-4"/>
    <property type="protein sequence ID" value="ENSP00000480759.1"/>
    <property type="gene ID" value="ENSG00000130167.14"/>
</dbReference>
<dbReference type="GeneID" id="26526"/>
<dbReference type="KEGG" id="hsa:26526"/>
<dbReference type="MANE-Select" id="ENST00000590327.6">
    <molecule id="Q9UKR8-2"/>
    <property type="protein sequence ID" value="ENSP00000467341.1"/>
    <property type="RefSeq nucleotide sequence ID" value="NM_001282509.2"/>
    <property type="RefSeq protein sequence ID" value="NP_001269438.1"/>
</dbReference>
<dbReference type="UCSC" id="uc002mqv.3">
    <molecule id="Q9UKR8-1"/>
    <property type="organism name" value="human"/>
</dbReference>
<dbReference type="AGR" id="HGNC:30725"/>
<dbReference type="CTD" id="26526"/>
<dbReference type="DisGeNET" id="26526"/>
<dbReference type="GeneCards" id="TSPAN16"/>
<dbReference type="HGNC" id="HGNC:30725">
    <property type="gene designation" value="TSPAN16"/>
</dbReference>
<dbReference type="HPA" id="ENSG00000130167">
    <property type="expression patterns" value="Tissue enriched (testis)"/>
</dbReference>
<dbReference type="MIM" id="617580">
    <property type="type" value="gene"/>
</dbReference>
<dbReference type="neXtProt" id="NX_Q9UKR8"/>
<dbReference type="OpenTargets" id="ENSG00000130167"/>
<dbReference type="PharmGKB" id="PA134989909"/>
<dbReference type="VEuPathDB" id="HostDB:ENSG00000130167"/>
<dbReference type="eggNOG" id="KOG3882">
    <property type="taxonomic scope" value="Eukaryota"/>
</dbReference>
<dbReference type="GeneTree" id="ENSGT00510000049338"/>
<dbReference type="HOGENOM" id="CLU_055524_7_1_1"/>
<dbReference type="InParanoid" id="Q9UKR8"/>
<dbReference type="OMA" id="MEWNLVM"/>
<dbReference type="OrthoDB" id="6134317at2759"/>
<dbReference type="PAN-GO" id="Q9UKR8">
    <property type="GO annotations" value="1 GO annotation based on evolutionary models"/>
</dbReference>
<dbReference type="PhylomeDB" id="Q9UKR8"/>
<dbReference type="TreeFam" id="TF316345"/>
<dbReference type="PathwayCommons" id="Q9UKR8"/>
<dbReference type="BioGRID-ORCS" id="26526">
    <property type="hits" value="21 hits in 1141 CRISPR screens"/>
</dbReference>
<dbReference type="ChiTaRS" id="TSPAN16">
    <property type="organism name" value="human"/>
</dbReference>
<dbReference type="GenomeRNAi" id="26526"/>
<dbReference type="Pharos" id="Q9UKR8">
    <property type="development level" value="Tbio"/>
</dbReference>
<dbReference type="PRO" id="PR:Q9UKR8"/>
<dbReference type="Proteomes" id="UP000005640">
    <property type="component" value="Chromosome 19"/>
</dbReference>
<dbReference type="RNAct" id="Q9UKR8">
    <property type="molecule type" value="protein"/>
</dbReference>
<dbReference type="Bgee" id="ENSG00000130167">
    <property type="expression patterns" value="Expressed in sperm and 102 other cell types or tissues"/>
</dbReference>
<dbReference type="ExpressionAtlas" id="Q9UKR8">
    <property type="expression patterns" value="baseline and differential"/>
</dbReference>
<dbReference type="GO" id="GO:0016020">
    <property type="term" value="C:membrane"/>
    <property type="evidence" value="ECO:0000304"/>
    <property type="project" value="ProtInc"/>
</dbReference>
<dbReference type="GO" id="GO:0005886">
    <property type="term" value="C:plasma membrane"/>
    <property type="evidence" value="ECO:0000318"/>
    <property type="project" value="GO_Central"/>
</dbReference>
<dbReference type="CDD" id="cd03156">
    <property type="entry name" value="uroplakin_I_like_LEL"/>
    <property type="match status" value="1"/>
</dbReference>
<dbReference type="FunFam" id="1.10.1450.10:FF:000027">
    <property type="entry name" value="Tetraspanin"/>
    <property type="match status" value="1"/>
</dbReference>
<dbReference type="Gene3D" id="1.10.1450.10">
    <property type="entry name" value="Tetraspanin"/>
    <property type="match status" value="1"/>
</dbReference>
<dbReference type="InterPro" id="IPR018499">
    <property type="entry name" value="Tetraspanin/Peripherin"/>
</dbReference>
<dbReference type="InterPro" id="IPR000301">
    <property type="entry name" value="Tetraspanin_animals"/>
</dbReference>
<dbReference type="InterPro" id="IPR008952">
    <property type="entry name" value="Tetraspanin_EC2_sf"/>
</dbReference>
<dbReference type="PANTHER" id="PTHR19282">
    <property type="entry name" value="TETRASPANIN"/>
    <property type="match status" value="1"/>
</dbReference>
<dbReference type="PANTHER" id="PTHR19282:SF455">
    <property type="entry name" value="TETRASPANIN-16"/>
    <property type="match status" value="1"/>
</dbReference>
<dbReference type="Pfam" id="PF00335">
    <property type="entry name" value="Tetraspanin"/>
    <property type="match status" value="1"/>
</dbReference>
<dbReference type="PIRSF" id="PIRSF002419">
    <property type="entry name" value="Tetraspanin"/>
    <property type="match status" value="1"/>
</dbReference>
<dbReference type="PRINTS" id="PR00259">
    <property type="entry name" value="TMFOUR"/>
</dbReference>
<dbReference type="SUPFAM" id="SSF48652">
    <property type="entry name" value="Tetraspanin"/>
    <property type="match status" value="1"/>
</dbReference>
<reference key="1">
    <citation type="journal article" date="1999" name="Biochim. Biophys. Acta">
        <title>The molecular characterisation of a novel tetraspanin protein, TM4-B.</title>
        <authorList>
            <person name="Puls K.L."/>
            <person name="Ni J."/>
            <person name="Liu D."/>
            <person name="Morahan G."/>
            <person name="Wright M.D."/>
        </authorList>
    </citation>
    <scope>NUCLEOTIDE SEQUENCE [MRNA] (ISOFORM 1)</scope>
</reference>
<reference key="2">
    <citation type="journal article" date="2004" name="Nature">
        <title>The DNA sequence and biology of human chromosome 19.</title>
        <authorList>
            <person name="Grimwood J."/>
            <person name="Gordon L.A."/>
            <person name="Olsen A.S."/>
            <person name="Terry A."/>
            <person name="Schmutz J."/>
            <person name="Lamerdin J.E."/>
            <person name="Hellsten U."/>
            <person name="Goodstein D."/>
            <person name="Couronne O."/>
            <person name="Tran-Gyamfi M."/>
            <person name="Aerts A."/>
            <person name="Altherr M."/>
            <person name="Ashworth L."/>
            <person name="Bajorek E."/>
            <person name="Black S."/>
            <person name="Branscomb E."/>
            <person name="Caenepeel S."/>
            <person name="Carrano A.V."/>
            <person name="Caoile C."/>
            <person name="Chan Y.M."/>
            <person name="Christensen M."/>
            <person name="Cleland C.A."/>
            <person name="Copeland A."/>
            <person name="Dalin E."/>
            <person name="Dehal P."/>
            <person name="Denys M."/>
            <person name="Detter J.C."/>
            <person name="Escobar J."/>
            <person name="Flowers D."/>
            <person name="Fotopulos D."/>
            <person name="Garcia C."/>
            <person name="Georgescu A.M."/>
            <person name="Glavina T."/>
            <person name="Gomez M."/>
            <person name="Gonzales E."/>
            <person name="Groza M."/>
            <person name="Hammon N."/>
            <person name="Hawkins T."/>
            <person name="Haydu L."/>
            <person name="Ho I."/>
            <person name="Huang W."/>
            <person name="Israni S."/>
            <person name="Jett J."/>
            <person name="Kadner K."/>
            <person name="Kimball H."/>
            <person name="Kobayashi A."/>
            <person name="Larionov V."/>
            <person name="Leem S.-H."/>
            <person name="Lopez F."/>
            <person name="Lou Y."/>
            <person name="Lowry S."/>
            <person name="Malfatti S."/>
            <person name="Martinez D."/>
            <person name="McCready P.M."/>
            <person name="Medina C."/>
            <person name="Morgan J."/>
            <person name="Nelson K."/>
            <person name="Nolan M."/>
            <person name="Ovcharenko I."/>
            <person name="Pitluck S."/>
            <person name="Pollard M."/>
            <person name="Popkie A.P."/>
            <person name="Predki P."/>
            <person name="Quan G."/>
            <person name="Ramirez L."/>
            <person name="Rash S."/>
            <person name="Retterer J."/>
            <person name="Rodriguez A."/>
            <person name="Rogers S."/>
            <person name="Salamov A."/>
            <person name="Salazar A."/>
            <person name="She X."/>
            <person name="Smith D."/>
            <person name="Slezak T."/>
            <person name="Solovyev V."/>
            <person name="Thayer N."/>
            <person name="Tice H."/>
            <person name="Tsai M."/>
            <person name="Ustaszewska A."/>
            <person name="Vo N."/>
            <person name="Wagner M."/>
            <person name="Wheeler J."/>
            <person name="Wu K."/>
            <person name="Xie G."/>
            <person name="Yang J."/>
            <person name="Dubchak I."/>
            <person name="Furey T.S."/>
            <person name="DeJong P."/>
            <person name="Dickson M."/>
            <person name="Gordon D."/>
            <person name="Eichler E.E."/>
            <person name="Pennacchio L.A."/>
            <person name="Richardson P."/>
            <person name="Stubbs L."/>
            <person name="Rokhsar D.S."/>
            <person name="Myers R.M."/>
            <person name="Rubin E.M."/>
            <person name="Lucas S.M."/>
        </authorList>
    </citation>
    <scope>NUCLEOTIDE SEQUENCE [LARGE SCALE GENOMIC DNA]</scope>
</reference>
<reference key="3">
    <citation type="journal article" date="2004" name="Genome Res.">
        <title>The status, quality, and expansion of the NIH full-length cDNA project: the Mammalian Gene Collection (MGC).</title>
        <authorList>
            <consortium name="The MGC Project Team"/>
        </authorList>
    </citation>
    <scope>NUCLEOTIDE SEQUENCE [LARGE SCALE MRNA] (ISOFORM 4)</scope>
    <source>
        <tissue>Brain</tissue>
    </source>
</reference>
<keyword id="KW-0025">Alternative splicing</keyword>
<keyword id="KW-0472">Membrane</keyword>
<keyword id="KW-1267">Proteomics identification</keyword>
<keyword id="KW-1185">Reference proteome</keyword>
<keyword id="KW-0812">Transmembrane</keyword>
<keyword id="KW-1133">Transmembrane helix</keyword>
<organism>
    <name type="scientific">Homo sapiens</name>
    <name type="common">Human</name>
    <dbReference type="NCBI Taxonomy" id="9606"/>
    <lineage>
        <taxon>Eukaryota</taxon>
        <taxon>Metazoa</taxon>
        <taxon>Chordata</taxon>
        <taxon>Craniata</taxon>
        <taxon>Vertebrata</taxon>
        <taxon>Euteleostomi</taxon>
        <taxon>Mammalia</taxon>
        <taxon>Eutheria</taxon>
        <taxon>Euarchontoglires</taxon>
        <taxon>Primates</taxon>
        <taxon>Haplorrhini</taxon>
        <taxon>Catarrhini</taxon>
        <taxon>Hominidae</taxon>
        <taxon>Homo</taxon>
    </lineage>
</organism>
<gene>
    <name type="primary">TSPAN16</name>
    <name type="synonym">TM4SF16</name>
</gene>
<evidence type="ECO:0000255" key="1"/>
<evidence type="ECO:0000303" key="2">
    <source>
    </source>
</evidence>
<evidence type="ECO:0000305" key="3"/>
<comment type="interaction">
    <interactant intactId="EBI-54722157">
        <id>Q9UKR8</id>
    </interactant>
    <interactant intactId="EBI-7129521">
        <id>Q8NFZ8</id>
        <label>CADM4</label>
    </interactant>
    <organismsDiffer>false</organismsDiffer>
    <experiments>2</experiments>
</comment>
<comment type="subcellular location">
    <subcellularLocation>
        <location evidence="3">Membrane</location>
        <topology evidence="3">Multi-pass membrane protein</topology>
    </subcellularLocation>
</comment>
<comment type="alternative products">
    <event type="alternative splicing"/>
    <isoform>
        <id>Q9UKR8-1</id>
        <name>1</name>
        <sequence type="displayed"/>
    </isoform>
    <isoform>
        <id>Q9UKR8-2</id>
        <name>2</name>
        <sequence type="described" ref="VSP_056726"/>
    </isoform>
    <isoform>
        <id>Q9UKR8-3</id>
        <name>3</name>
        <sequence type="described" ref="VSP_056723 VSP_056726"/>
    </isoform>
    <isoform>
        <id>Q9UKR8-4</id>
        <name>4</name>
        <sequence type="described" ref="VSP_056724 VSP_056725"/>
    </isoform>
</comment>
<comment type="tissue specificity">
    <text>Broadly expressed in most human tissues and cell lines including neural and bone marrow derived tissues.</text>
</comment>
<comment type="similarity">
    <text evidence="3">Belongs to the tetraspanin (TM4SF) family.</text>
</comment>
<accession>Q9UKR8</accession>
<accession>K7EN22</accession>
<accession>K7EPD8</accession>
<accession>Q8N6J7</accession>
<name>TSN16_HUMAN</name>